<protein>
    <recommendedName>
        <fullName evidence="1">Aspartyl/glutamyl-tRNA(Asn/Gln) amidotransferase subunit C</fullName>
        <shortName evidence="1">Asp/Glu-ADT subunit C</shortName>
        <ecNumber evidence="1">6.3.5.-</ecNumber>
    </recommendedName>
</protein>
<name>GATC_BURP0</name>
<keyword id="KW-0067">ATP-binding</keyword>
<keyword id="KW-0436">Ligase</keyword>
<keyword id="KW-0547">Nucleotide-binding</keyword>
<keyword id="KW-0648">Protein biosynthesis</keyword>
<reference key="1">
    <citation type="journal article" date="2010" name="Genome Biol. Evol.">
        <title>Continuing evolution of Burkholderia mallei through genome reduction and large-scale rearrangements.</title>
        <authorList>
            <person name="Losada L."/>
            <person name="Ronning C.M."/>
            <person name="DeShazer D."/>
            <person name="Woods D."/>
            <person name="Fedorova N."/>
            <person name="Kim H.S."/>
            <person name="Shabalina S.A."/>
            <person name="Pearson T.R."/>
            <person name="Brinkac L."/>
            <person name="Tan P."/>
            <person name="Nandi T."/>
            <person name="Crabtree J."/>
            <person name="Badger J."/>
            <person name="Beckstrom-Sternberg S."/>
            <person name="Saqib M."/>
            <person name="Schutzer S.E."/>
            <person name="Keim P."/>
            <person name="Nierman W.C."/>
        </authorList>
    </citation>
    <scope>NUCLEOTIDE SEQUENCE [LARGE SCALE GENOMIC DNA]</scope>
    <source>
        <strain>1106a</strain>
    </source>
</reference>
<feature type="chain" id="PRO_1000016090" description="Aspartyl/glutamyl-tRNA(Asn/Gln) amidotransferase subunit C">
    <location>
        <begin position="1"/>
        <end position="99"/>
    </location>
</feature>
<accession>A3NQ44</accession>
<evidence type="ECO:0000255" key="1">
    <source>
        <dbReference type="HAMAP-Rule" id="MF_00122"/>
    </source>
</evidence>
<dbReference type="EC" id="6.3.5.-" evidence="1"/>
<dbReference type="EMBL" id="CP000572">
    <property type="protein sequence ID" value="ABN92408.1"/>
    <property type="molecule type" value="Genomic_DNA"/>
</dbReference>
<dbReference type="RefSeq" id="WP_004189769.1">
    <property type="nucleotide sequence ID" value="NC_009076.1"/>
</dbReference>
<dbReference type="SMR" id="A3NQ44"/>
<dbReference type="GeneID" id="93058695"/>
<dbReference type="KEGG" id="bpl:BURPS1106A_0182"/>
<dbReference type="HOGENOM" id="CLU_105899_2_2_4"/>
<dbReference type="Proteomes" id="UP000006738">
    <property type="component" value="Chromosome I"/>
</dbReference>
<dbReference type="GO" id="GO:0050566">
    <property type="term" value="F:asparaginyl-tRNA synthase (glutamine-hydrolyzing) activity"/>
    <property type="evidence" value="ECO:0007669"/>
    <property type="project" value="RHEA"/>
</dbReference>
<dbReference type="GO" id="GO:0005524">
    <property type="term" value="F:ATP binding"/>
    <property type="evidence" value="ECO:0007669"/>
    <property type="project" value="UniProtKB-KW"/>
</dbReference>
<dbReference type="GO" id="GO:0050567">
    <property type="term" value="F:glutaminyl-tRNA synthase (glutamine-hydrolyzing) activity"/>
    <property type="evidence" value="ECO:0007669"/>
    <property type="project" value="UniProtKB-UniRule"/>
</dbReference>
<dbReference type="GO" id="GO:0070681">
    <property type="term" value="P:glutaminyl-tRNAGln biosynthesis via transamidation"/>
    <property type="evidence" value="ECO:0007669"/>
    <property type="project" value="TreeGrafter"/>
</dbReference>
<dbReference type="GO" id="GO:0006450">
    <property type="term" value="P:regulation of translational fidelity"/>
    <property type="evidence" value="ECO:0007669"/>
    <property type="project" value="InterPro"/>
</dbReference>
<dbReference type="GO" id="GO:0006412">
    <property type="term" value="P:translation"/>
    <property type="evidence" value="ECO:0007669"/>
    <property type="project" value="UniProtKB-UniRule"/>
</dbReference>
<dbReference type="Gene3D" id="1.10.20.60">
    <property type="entry name" value="Glu-tRNAGln amidotransferase C subunit, N-terminal domain"/>
    <property type="match status" value="1"/>
</dbReference>
<dbReference type="HAMAP" id="MF_00122">
    <property type="entry name" value="GatC"/>
    <property type="match status" value="1"/>
</dbReference>
<dbReference type="InterPro" id="IPR036113">
    <property type="entry name" value="Asp/Glu-ADT_sf_sub_c"/>
</dbReference>
<dbReference type="InterPro" id="IPR003837">
    <property type="entry name" value="GatC"/>
</dbReference>
<dbReference type="NCBIfam" id="TIGR00135">
    <property type="entry name" value="gatC"/>
    <property type="match status" value="1"/>
</dbReference>
<dbReference type="PANTHER" id="PTHR15004">
    <property type="entry name" value="GLUTAMYL-TRNA(GLN) AMIDOTRANSFERASE SUBUNIT C, MITOCHONDRIAL"/>
    <property type="match status" value="1"/>
</dbReference>
<dbReference type="PANTHER" id="PTHR15004:SF0">
    <property type="entry name" value="GLUTAMYL-TRNA(GLN) AMIDOTRANSFERASE SUBUNIT C, MITOCHONDRIAL"/>
    <property type="match status" value="1"/>
</dbReference>
<dbReference type="Pfam" id="PF02686">
    <property type="entry name" value="GatC"/>
    <property type="match status" value="1"/>
</dbReference>
<dbReference type="SUPFAM" id="SSF141000">
    <property type="entry name" value="Glu-tRNAGln amidotransferase C subunit"/>
    <property type="match status" value="1"/>
</dbReference>
<comment type="function">
    <text evidence="1">Allows the formation of correctly charged Asn-tRNA(Asn) or Gln-tRNA(Gln) through the transamidation of misacylated Asp-tRNA(Asn) or Glu-tRNA(Gln) in organisms which lack either or both of asparaginyl-tRNA or glutaminyl-tRNA synthetases. The reaction takes place in the presence of glutamine and ATP through an activated phospho-Asp-tRNA(Asn) or phospho-Glu-tRNA(Gln).</text>
</comment>
<comment type="catalytic activity">
    <reaction evidence="1">
        <text>L-glutamyl-tRNA(Gln) + L-glutamine + ATP + H2O = L-glutaminyl-tRNA(Gln) + L-glutamate + ADP + phosphate + H(+)</text>
        <dbReference type="Rhea" id="RHEA:17521"/>
        <dbReference type="Rhea" id="RHEA-COMP:9681"/>
        <dbReference type="Rhea" id="RHEA-COMP:9684"/>
        <dbReference type="ChEBI" id="CHEBI:15377"/>
        <dbReference type="ChEBI" id="CHEBI:15378"/>
        <dbReference type="ChEBI" id="CHEBI:29985"/>
        <dbReference type="ChEBI" id="CHEBI:30616"/>
        <dbReference type="ChEBI" id="CHEBI:43474"/>
        <dbReference type="ChEBI" id="CHEBI:58359"/>
        <dbReference type="ChEBI" id="CHEBI:78520"/>
        <dbReference type="ChEBI" id="CHEBI:78521"/>
        <dbReference type="ChEBI" id="CHEBI:456216"/>
    </reaction>
</comment>
<comment type="catalytic activity">
    <reaction evidence="1">
        <text>L-aspartyl-tRNA(Asn) + L-glutamine + ATP + H2O = L-asparaginyl-tRNA(Asn) + L-glutamate + ADP + phosphate + 2 H(+)</text>
        <dbReference type="Rhea" id="RHEA:14513"/>
        <dbReference type="Rhea" id="RHEA-COMP:9674"/>
        <dbReference type="Rhea" id="RHEA-COMP:9677"/>
        <dbReference type="ChEBI" id="CHEBI:15377"/>
        <dbReference type="ChEBI" id="CHEBI:15378"/>
        <dbReference type="ChEBI" id="CHEBI:29985"/>
        <dbReference type="ChEBI" id="CHEBI:30616"/>
        <dbReference type="ChEBI" id="CHEBI:43474"/>
        <dbReference type="ChEBI" id="CHEBI:58359"/>
        <dbReference type="ChEBI" id="CHEBI:78515"/>
        <dbReference type="ChEBI" id="CHEBI:78516"/>
        <dbReference type="ChEBI" id="CHEBI:456216"/>
    </reaction>
</comment>
<comment type="subunit">
    <text evidence="1">Heterotrimer of A, B and C subunits.</text>
</comment>
<comment type="similarity">
    <text evidence="1">Belongs to the GatC family.</text>
</comment>
<proteinExistence type="inferred from homology"/>
<organism>
    <name type="scientific">Burkholderia pseudomallei (strain 1106a)</name>
    <dbReference type="NCBI Taxonomy" id="357348"/>
    <lineage>
        <taxon>Bacteria</taxon>
        <taxon>Pseudomonadati</taxon>
        <taxon>Pseudomonadota</taxon>
        <taxon>Betaproteobacteria</taxon>
        <taxon>Burkholderiales</taxon>
        <taxon>Burkholderiaceae</taxon>
        <taxon>Burkholderia</taxon>
        <taxon>pseudomallei group</taxon>
    </lineage>
</organism>
<sequence>MALTLTDVTRIAHLARLEMADADAERTLTQLNEFFGLVEQMQAVDTTGIAPLAHPIEQILEVAQRLREDAVTEHVNRDDNQRPAPAVQDGLYLVPKVIE</sequence>
<gene>
    <name evidence="1" type="primary">gatC</name>
    <name type="ordered locus">BURPS1106A_0182</name>
</gene>